<proteinExistence type="inferred from homology"/>
<protein>
    <recommendedName>
        <fullName evidence="1">Probable cytosol aminopeptidase</fullName>
        <ecNumber evidence="1">3.4.11.1</ecNumber>
    </recommendedName>
    <alternativeName>
        <fullName evidence="1">Leucine aminopeptidase</fullName>
        <shortName evidence="1">LAP</shortName>
        <ecNumber evidence="1">3.4.11.10</ecNumber>
    </alternativeName>
    <alternativeName>
        <fullName evidence="1">Leucyl aminopeptidase</fullName>
    </alternativeName>
</protein>
<organism>
    <name type="scientific">Yersinia pestis</name>
    <dbReference type="NCBI Taxonomy" id="632"/>
    <lineage>
        <taxon>Bacteria</taxon>
        <taxon>Pseudomonadati</taxon>
        <taxon>Pseudomonadota</taxon>
        <taxon>Gammaproteobacteria</taxon>
        <taxon>Enterobacterales</taxon>
        <taxon>Yersiniaceae</taxon>
        <taxon>Yersinia</taxon>
    </lineage>
</organism>
<reference key="1">
    <citation type="journal article" date="2001" name="Nature">
        <title>Genome sequence of Yersinia pestis, the causative agent of plague.</title>
        <authorList>
            <person name="Parkhill J."/>
            <person name="Wren B.W."/>
            <person name="Thomson N.R."/>
            <person name="Titball R.W."/>
            <person name="Holden M.T.G."/>
            <person name="Prentice M.B."/>
            <person name="Sebaihia M."/>
            <person name="James K.D."/>
            <person name="Churcher C.M."/>
            <person name="Mungall K.L."/>
            <person name="Baker S."/>
            <person name="Basham D."/>
            <person name="Bentley S.D."/>
            <person name="Brooks K."/>
            <person name="Cerdeno-Tarraga A.-M."/>
            <person name="Chillingworth T."/>
            <person name="Cronin A."/>
            <person name="Davies R.M."/>
            <person name="Davis P."/>
            <person name="Dougan G."/>
            <person name="Feltwell T."/>
            <person name="Hamlin N."/>
            <person name="Holroyd S."/>
            <person name="Jagels K."/>
            <person name="Karlyshev A.V."/>
            <person name="Leather S."/>
            <person name="Moule S."/>
            <person name="Oyston P.C.F."/>
            <person name="Quail M.A."/>
            <person name="Rutherford K.M."/>
            <person name="Simmonds M."/>
            <person name="Skelton J."/>
            <person name="Stevens K."/>
            <person name="Whitehead S."/>
            <person name="Barrell B.G."/>
        </authorList>
    </citation>
    <scope>NUCLEOTIDE SEQUENCE [LARGE SCALE GENOMIC DNA]</scope>
    <source>
        <strain>CO-92 / Biovar Orientalis</strain>
    </source>
</reference>
<reference key="2">
    <citation type="journal article" date="2002" name="J. Bacteriol.">
        <title>Genome sequence of Yersinia pestis KIM.</title>
        <authorList>
            <person name="Deng W."/>
            <person name="Burland V."/>
            <person name="Plunkett G. III"/>
            <person name="Boutin A."/>
            <person name="Mayhew G.F."/>
            <person name="Liss P."/>
            <person name="Perna N.T."/>
            <person name="Rose D.J."/>
            <person name="Mau B."/>
            <person name="Zhou S."/>
            <person name="Schwartz D.C."/>
            <person name="Fetherston J.D."/>
            <person name="Lindler L.E."/>
            <person name="Brubaker R.R."/>
            <person name="Plano G.V."/>
            <person name="Straley S.C."/>
            <person name="McDonough K.A."/>
            <person name="Nilles M.L."/>
            <person name="Matson J.S."/>
            <person name="Blattner F.R."/>
            <person name="Perry R.D."/>
        </authorList>
    </citation>
    <scope>NUCLEOTIDE SEQUENCE [LARGE SCALE GENOMIC DNA]</scope>
    <source>
        <strain>KIM10+ / Biovar Mediaevalis</strain>
    </source>
</reference>
<reference key="3">
    <citation type="journal article" date="2004" name="DNA Res.">
        <title>Complete genome sequence of Yersinia pestis strain 91001, an isolate avirulent to humans.</title>
        <authorList>
            <person name="Song Y."/>
            <person name="Tong Z."/>
            <person name="Wang J."/>
            <person name="Wang L."/>
            <person name="Guo Z."/>
            <person name="Han Y."/>
            <person name="Zhang J."/>
            <person name="Pei D."/>
            <person name="Zhou D."/>
            <person name="Qin H."/>
            <person name="Pang X."/>
            <person name="Han Y."/>
            <person name="Zhai J."/>
            <person name="Li M."/>
            <person name="Cui B."/>
            <person name="Qi Z."/>
            <person name="Jin L."/>
            <person name="Dai R."/>
            <person name="Chen F."/>
            <person name="Li S."/>
            <person name="Ye C."/>
            <person name="Du Z."/>
            <person name="Lin W."/>
            <person name="Wang J."/>
            <person name="Yu J."/>
            <person name="Yang H."/>
            <person name="Wang J."/>
            <person name="Huang P."/>
            <person name="Yang R."/>
        </authorList>
    </citation>
    <scope>NUCLEOTIDE SEQUENCE [LARGE SCALE GENOMIC DNA]</scope>
    <source>
        <strain>91001 / Biovar Mediaevalis</strain>
    </source>
</reference>
<sequence>MEFSVKSGSPEKQRSACIVVGVFEPRRLSPIAEQLDKISDGYISALLRRGELEGKVGQTLLLHHVPNILSERILLIGCGKERELDERQYKQVIQKTINTLNDTGSMEAVCFLTELHVKGRNTYWKVRQAVETAKETLYTFDQLKSNKTEPRRPLRKMVFNVPTRRELTSGERAIQHGLAIASGIKAAKDLGNMPPNICNAAYLASQARQLADAFSTNTVTRVIGEQQMKELGMHAYLAVGHGSQNESLMSVIEYKGNPNKDAKPIVLVGKGLTFDSGGISIKPAEGMDEMKYDMCGAATVYGVMRVVAELQLPLNVVGVLAGCENMPGGRAYRPGDILTTMSGQTVEVLNTDAEGRLVLCDALTYVERFEPELVIDIATLTGACVVALGNHLTGLMSNHNPLAHELIGASEQAGDRAWRLPLGEEYYEQLDSNFADMANIGGRAGGAITAGCFLSRFTRKYSWAHLDIAGTAWRSGKNKGATGRPVALLSQFLLNRAGLNGDD</sequence>
<feature type="chain" id="PRO_0000165820" description="Probable cytosol aminopeptidase">
    <location>
        <begin position="1"/>
        <end position="503"/>
    </location>
</feature>
<feature type="active site" evidence="1">
    <location>
        <position position="282"/>
    </location>
</feature>
<feature type="active site" evidence="1">
    <location>
        <position position="356"/>
    </location>
</feature>
<feature type="binding site" evidence="1">
    <location>
        <position position="270"/>
    </location>
    <ligand>
        <name>Mn(2+)</name>
        <dbReference type="ChEBI" id="CHEBI:29035"/>
        <label>2</label>
    </ligand>
</feature>
<feature type="binding site" evidence="1">
    <location>
        <position position="275"/>
    </location>
    <ligand>
        <name>Mn(2+)</name>
        <dbReference type="ChEBI" id="CHEBI:29035"/>
        <label>1</label>
    </ligand>
</feature>
<feature type="binding site" evidence="1">
    <location>
        <position position="275"/>
    </location>
    <ligand>
        <name>Mn(2+)</name>
        <dbReference type="ChEBI" id="CHEBI:29035"/>
        <label>2</label>
    </ligand>
</feature>
<feature type="binding site" evidence="1">
    <location>
        <position position="293"/>
    </location>
    <ligand>
        <name>Mn(2+)</name>
        <dbReference type="ChEBI" id="CHEBI:29035"/>
        <label>2</label>
    </ligand>
</feature>
<feature type="binding site" evidence="1">
    <location>
        <position position="352"/>
    </location>
    <ligand>
        <name>Mn(2+)</name>
        <dbReference type="ChEBI" id="CHEBI:29035"/>
        <label>1</label>
    </ligand>
</feature>
<feature type="binding site" evidence="1">
    <location>
        <position position="354"/>
    </location>
    <ligand>
        <name>Mn(2+)</name>
        <dbReference type="ChEBI" id="CHEBI:29035"/>
        <label>1</label>
    </ligand>
</feature>
<feature type="binding site" evidence="1">
    <location>
        <position position="354"/>
    </location>
    <ligand>
        <name>Mn(2+)</name>
        <dbReference type="ChEBI" id="CHEBI:29035"/>
        <label>2</label>
    </ligand>
</feature>
<evidence type="ECO:0000255" key="1">
    <source>
        <dbReference type="HAMAP-Rule" id="MF_00181"/>
    </source>
</evidence>
<comment type="function">
    <text evidence="1">Presumably involved in the processing and regular turnover of intracellular proteins. Catalyzes the removal of unsubstituted N-terminal amino acids from various peptides.</text>
</comment>
<comment type="catalytic activity">
    <reaction evidence="1">
        <text>Release of an N-terminal amino acid, Xaa-|-Yaa-, in which Xaa is preferably Leu, but may be other amino acids including Pro although not Arg or Lys, and Yaa may be Pro. Amino acid amides and methyl esters are also readily hydrolyzed, but rates on arylamides are exceedingly low.</text>
        <dbReference type="EC" id="3.4.11.1"/>
    </reaction>
</comment>
<comment type="catalytic activity">
    <reaction evidence="1">
        <text>Release of an N-terminal amino acid, preferentially leucine, but not glutamic or aspartic acids.</text>
        <dbReference type="EC" id="3.4.11.10"/>
    </reaction>
</comment>
<comment type="cofactor">
    <cofactor evidence="1">
        <name>Mn(2+)</name>
        <dbReference type="ChEBI" id="CHEBI:29035"/>
    </cofactor>
    <text evidence="1">Binds 2 manganese ions per subunit.</text>
</comment>
<comment type="subcellular location">
    <subcellularLocation>
        <location evidence="1">Cytoplasm</location>
    </subcellularLocation>
</comment>
<comment type="similarity">
    <text evidence="1">Belongs to the peptidase M17 family.</text>
</comment>
<dbReference type="EC" id="3.4.11.1" evidence="1"/>
<dbReference type="EC" id="3.4.11.10" evidence="1"/>
<dbReference type="EMBL" id="AL590842">
    <property type="protein sequence ID" value="CAL22030.1"/>
    <property type="molecule type" value="Genomic_DNA"/>
</dbReference>
<dbReference type="EMBL" id="AE009952">
    <property type="protein sequence ID" value="AAM84333.1"/>
    <property type="molecule type" value="Genomic_DNA"/>
</dbReference>
<dbReference type="EMBL" id="AE017042">
    <property type="protein sequence ID" value="AAS60911.1"/>
    <property type="molecule type" value="Genomic_DNA"/>
</dbReference>
<dbReference type="PIR" id="AC0418">
    <property type="entry name" value="AC0418"/>
</dbReference>
<dbReference type="RefSeq" id="WP_002209310.1">
    <property type="nucleotide sequence ID" value="NZ_WUCM01000023.1"/>
</dbReference>
<dbReference type="RefSeq" id="YP_002348332.1">
    <property type="nucleotide sequence ID" value="NC_003143.1"/>
</dbReference>
<dbReference type="SMR" id="Q8ZBH3"/>
<dbReference type="STRING" id="214092.YPO3441"/>
<dbReference type="MEROPS" id="M17.003"/>
<dbReference type="PaxDb" id="214092-YPO3441"/>
<dbReference type="DNASU" id="1145693"/>
<dbReference type="EnsemblBacteria" id="AAS60911">
    <property type="protein sequence ID" value="AAS60911"/>
    <property type="gene ID" value="YP_0643"/>
</dbReference>
<dbReference type="GeneID" id="57975268"/>
<dbReference type="KEGG" id="ype:YPO3441"/>
<dbReference type="KEGG" id="ypk:y0746"/>
<dbReference type="KEGG" id="ypm:YP_0643"/>
<dbReference type="PATRIC" id="fig|214092.21.peg.3930"/>
<dbReference type="eggNOG" id="COG0260">
    <property type="taxonomic scope" value="Bacteria"/>
</dbReference>
<dbReference type="HOGENOM" id="CLU_013734_2_2_6"/>
<dbReference type="OMA" id="WPMPLPE"/>
<dbReference type="OrthoDB" id="9809354at2"/>
<dbReference type="Proteomes" id="UP000000815">
    <property type="component" value="Chromosome"/>
</dbReference>
<dbReference type="Proteomes" id="UP000001019">
    <property type="component" value="Chromosome"/>
</dbReference>
<dbReference type="Proteomes" id="UP000002490">
    <property type="component" value="Chromosome"/>
</dbReference>
<dbReference type="GO" id="GO:0005737">
    <property type="term" value="C:cytoplasm"/>
    <property type="evidence" value="ECO:0000318"/>
    <property type="project" value="GO_Central"/>
</dbReference>
<dbReference type="GO" id="GO:0004177">
    <property type="term" value="F:aminopeptidase activity"/>
    <property type="evidence" value="ECO:0000318"/>
    <property type="project" value="GO_Central"/>
</dbReference>
<dbReference type="GO" id="GO:0030145">
    <property type="term" value="F:manganese ion binding"/>
    <property type="evidence" value="ECO:0007669"/>
    <property type="project" value="UniProtKB-UniRule"/>
</dbReference>
<dbReference type="GO" id="GO:0070006">
    <property type="term" value="F:metalloaminopeptidase activity"/>
    <property type="evidence" value="ECO:0007669"/>
    <property type="project" value="InterPro"/>
</dbReference>
<dbReference type="GO" id="GO:0006508">
    <property type="term" value="P:proteolysis"/>
    <property type="evidence" value="ECO:0000318"/>
    <property type="project" value="GO_Central"/>
</dbReference>
<dbReference type="CDD" id="cd00433">
    <property type="entry name" value="Peptidase_M17"/>
    <property type="match status" value="1"/>
</dbReference>
<dbReference type="FunFam" id="3.40.220.10:FF:000001">
    <property type="entry name" value="Probable cytosol aminopeptidase"/>
    <property type="match status" value="1"/>
</dbReference>
<dbReference type="FunFam" id="3.40.630.10:FF:000004">
    <property type="entry name" value="Probable cytosol aminopeptidase"/>
    <property type="match status" value="1"/>
</dbReference>
<dbReference type="Gene3D" id="3.40.220.10">
    <property type="entry name" value="Leucine Aminopeptidase, subunit E, domain 1"/>
    <property type="match status" value="1"/>
</dbReference>
<dbReference type="Gene3D" id="3.40.630.10">
    <property type="entry name" value="Zn peptidases"/>
    <property type="match status" value="1"/>
</dbReference>
<dbReference type="HAMAP" id="MF_00181">
    <property type="entry name" value="Cytosol_peptidase_M17"/>
    <property type="match status" value="1"/>
</dbReference>
<dbReference type="InterPro" id="IPR011356">
    <property type="entry name" value="Leucine_aapep/pepB"/>
</dbReference>
<dbReference type="InterPro" id="IPR043472">
    <property type="entry name" value="Macro_dom-like"/>
</dbReference>
<dbReference type="InterPro" id="IPR000819">
    <property type="entry name" value="Peptidase_M17_C"/>
</dbReference>
<dbReference type="InterPro" id="IPR023042">
    <property type="entry name" value="Peptidase_M17_leu_NH2_pept"/>
</dbReference>
<dbReference type="InterPro" id="IPR008283">
    <property type="entry name" value="Peptidase_M17_N"/>
</dbReference>
<dbReference type="NCBIfam" id="NF002072">
    <property type="entry name" value="PRK00913.1-1"/>
    <property type="match status" value="1"/>
</dbReference>
<dbReference type="NCBIfam" id="NF002074">
    <property type="entry name" value="PRK00913.1-4"/>
    <property type="match status" value="1"/>
</dbReference>
<dbReference type="PANTHER" id="PTHR11963:SF23">
    <property type="entry name" value="CYTOSOL AMINOPEPTIDASE"/>
    <property type="match status" value="1"/>
</dbReference>
<dbReference type="PANTHER" id="PTHR11963">
    <property type="entry name" value="LEUCINE AMINOPEPTIDASE-RELATED"/>
    <property type="match status" value="1"/>
</dbReference>
<dbReference type="Pfam" id="PF00883">
    <property type="entry name" value="Peptidase_M17"/>
    <property type="match status" value="1"/>
</dbReference>
<dbReference type="Pfam" id="PF02789">
    <property type="entry name" value="Peptidase_M17_N"/>
    <property type="match status" value="1"/>
</dbReference>
<dbReference type="PRINTS" id="PR00481">
    <property type="entry name" value="LAMNOPPTDASE"/>
</dbReference>
<dbReference type="SUPFAM" id="SSF52949">
    <property type="entry name" value="Macro domain-like"/>
    <property type="match status" value="1"/>
</dbReference>
<dbReference type="SUPFAM" id="SSF53187">
    <property type="entry name" value="Zn-dependent exopeptidases"/>
    <property type="match status" value="1"/>
</dbReference>
<dbReference type="PROSITE" id="PS00631">
    <property type="entry name" value="CYTOSOL_AP"/>
    <property type="match status" value="1"/>
</dbReference>
<keyword id="KW-0031">Aminopeptidase</keyword>
<keyword id="KW-0963">Cytoplasm</keyword>
<keyword id="KW-0378">Hydrolase</keyword>
<keyword id="KW-0464">Manganese</keyword>
<keyword id="KW-0479">Metal-binding</keyword>
<keyword id="KW-0645">Protease</keyword>
<keyword id="KW-1185">Reference proteome</keyword>
<accession>Q8ZBH3</accession>
<accession>Q0WBK6</accession>
<gene>
    <name evidence="1" type="primary">pepA</name>
    <name type="ordered locus">YPO3441</name>
    <name type="ordered locus">y0746</name>
    <name type="ordered locus">YP_0643</name>
</gene>
<name>AMPA_YERPE</name>